<comment type="function">
    <text evidence="1">This protein specifically catalyzes the removal of signal peptides from prolipoproteins.</text>
</comment>
<comment type="catalytic activity">
    <reaction evidence="1">
        <text>Release of signal peptides from bacterial membrane prolipoproteins. Hydrolyzes -Xaa-Yaa-Zaa-|-(S,diacylglyceryl)Cys-, in which Xaa is hydrophobic (preferably Leu), and Yaa (Ala or Ser) and Zaa (Gly or Ala) have small, neutral side chains.</text>
        <dbReference type="EC" id="3.4.23.36"/>
    </reaction>
</comment>
<comment type="pathway">
    <text evidence="1">Protein modification; lipoprotein biosynthesis (signal peptide cleavage).</text>
</comment>
<comment type="subcellular location">
    <subcellularLocation>
        <location evidence="1">Cell inner membrane</location>
        <topology evidence="1">Multi-pass membrane protein</topology>
    </subcellularLocation>
</comment>
<comment type="similarity">
    <text evidence="1">Belongs to the peptidase A8 family.</text>
</comment>
<gene>
    <name evidence="1" type="primary">lspA</name>
    <name type="ordered locus">Ava_2475</name>
</gene>
<reference key="1">
    <citation type="journal article" date="2014" name="Stand. Genomic Sci.">
        <title>Complete genome sequence of Anabaena variabilis ATCC 29413.</title>
        <authorList>
            <person name="Thiel T."/>
            <person name="Pratte B.S."/>
            <person name="Zhong J."/>
            <person name="Goodwin L."/>
            <person name="Copeland A."/>
            <person name="Lucas S."/>
            <person name="Han C."/>
            <person name="Pitluck S."/>
            <person name="Land M.L."/>
            <person name="Kyrpides N.C."/>
            <person name="Woyke T."/>
        </authorList>
    </citation>
    <scope>NUCLEOTIDE SEQUENCE [LARGE SCALE GENOMIC DNA]</scope>
    <source>
        <strain>ATCC 29413 / PCC 7937</strain>
    </source>
</reference>
<feature type="chain" id="PRO_1000038778" description="Lipoprotein signal peptidase">
    <location>
        <begin position="1"/>
        <end position="158"/>
    </location>
</feature>
<feature type="transmembrane region" description="Helical" evidence="1">
    <location>
        <begin position="7"/>
        <end position="27"/>
    </location>
</feature>
<feature type="transmembrane region" description="Helical" evidence="1">
    <location>
        <begin position="38"/>
        <end position="58"/>
    </location>
</feature>
<feature type="transmembrane region" description="Helical" evidence="1">
    <location>
        <begin position="67"/>
        <end position="87"/>
    </location>
</feature>
<feature type="transmembrane region" description="Helical" evidence="1">
    <location>
        <begin position="95"/>
        <end position="115"/>
    </location>
</feature>
<feature type="transmembrane region" description="Helical" evidence="1">
    <location>
        <begin position="125"/>
        <end position="145"/>
    </location>
</feature>
<feature type="active site" evidence="1">
    <location>
        <position position="116"/>
    </location>
</feature>
<feature type="active site" evidence="1">
    <location>
        <position position="132"/>
    </location>
</feature>
<organism>
    <name type="scientific">Trichormus variabilis (strain ATCC 29413 / PCC 7937)</name>
    <name type="common">Anabaena variabilis</name>
    <dbReference type="NCBI Taxonomy" id="240292"/>
    <lineage>
        <taxon>Bacteria</taxon>
        <taxon>Bacillati</taxon>
        <taxon>Cyanobacteriota</taxon>
        <taxon>Cyanophyceae</taxon>
        <taxon>Nostocales</taxon>
        <taxon>Nostocaceae</taxon>
        <taxon>Trichormus</taxon>
    </lineage>
</organism>
<evidence type="ECO:0000255" key="1">
    <source>
        <dbReference type="HAMAP-Rule" id="MF_00161"/>
    </source>
</evidence>
<sequence>MRFKNRLFWIAAFIAFFVDQLTKYWVVQTFSLGETLPILPGIFHFTYVTNTGAAFSLFSGKVEWLRWLSLGVSLLLIGLALLGPVLERWDQLGYGLILGGAMGNGIDRFALGYVVDFLDFRLINFAVFNMADSFISIGIVCLLLASLQKSPDSHHRSR</sequence>
<dbReference type="EC" id="3.4.23.36" evidence="1"/>
<dbReference type="EMBL" id="CP000117">
    <property type="protein sequence ID" value="ABA22090.1"/>
    <property type="molecule type" value="Genomic_DNA"/>
</dbReference>
<dbReference type="SMR" id="Q3MA96"/>
<dbReference type="STRING" id="240292.Ava_2475"/>
<dbReference type="KEGG" id="ava:Ava_2475"/>
<dbReference type="eggNOG" id="COG0597">
    <property type="taxonomic scope" value="Bacteria"/>
</dbReference>
<dbReference type="HOGENOM" id="CLU_083252_3_2_3"/>
<dbReference type="UniPathway" id="UPA00665"/>
<dbReference type="Proteomes" id="UP000002533">
    <property type="component" value="Chromosome"/>
</dbReference>
<dbReference type="GO" id="GO:0005886">
    <property type="term" value="C:plasma membrane"/>
    <property type="evidence" value="ECO:0007669"/>
    <property type="project" value="UniProtKB-SubCell"/>
</dbReference>
<dbReference type="GO" id="GO:0004190">
    <property type="term" value="F:aspartic-type endopeptidase activity"/>
    <property type="evidence" value="ECO:0007669"/>
    <property type="project" value="UniProtKB-UniRule"/>
</dbReference>
<dbReference type="GO" id="GO:0006508">
    <property type="term" value="P:proteolysis"/>
    <property type="evidence" value="ECO:0007669"/>
    <property type="project" value="UniProtKB-KW"/>
</dbReference>
<dbReference type="HAMAP" id="MF_00161">
    <property type="entry name" value="LspA"/>
    <property type="match status" value="1"/>
</dbReference>
<dbReference type="InterPro" id="IPR001872">
    <property type="entry name" value="Peptidase_A8"/>
</dbReference>
<dbReference type="NCBIfam" id="TIGR00077">
    <property type="entry name" value="lspA"/>
    <property type="match status" value="1"/>
</dbReference>
<dbReference type="PANTHER" id="PTHR33695">
    <property type="entry name" value="LIPOPROTEIN SIGNAL PEPTIDASE"/>
    <property type="match status" value="1"/>
</dbReference>
<dbReference type="PANTHER" id="PTHR33695:SF1">
    <property type="entry name" value="LIPOPROTEIN SIGNAL PEPTIDASE"/>
    <property type="match status" value="1"/>
</dbReference>
<dbReference type="Pfam" id="PF01252">
    <property type="entry name" value="Peptidase_A8"/>
    <property type="match status" value="1"/>
</dbReference>
<dbReference type="PRINTS" id="PR00781">
    <property type="entry name" value="LIPOSIGPTASE"/>
</dbReference>
<dbReference type="PROSITE" id="PS00855">
    <property type="entry name" value="SPASE_II"/>
    <property type="match status" value="1"/>
</dbReference>
<protein>
    <recommendedName>
        <fullName evidence="1">Lipoprotein signal peptidase</fullName>
        <ecNumber evidence="1">3.4.23.36</ecNumber>
    </recommendedName>
    <alternativeName>
        <fullName evidence="1">Prolipoprotein signal peptidase</fullName>
    </alternativeName>
    <alternativeName>
        <fullName evidence="1">Signal peptidase II</fullName>
        <shortName evidence="1">SPase II</shortName>
    </alternativeName>
</protein>
<proteinExistence type="inferred from homology"/>
<name>LSPA_TRIV2</name>
<accession>Q3MA96</accession>
<keyword id="KW-0064">Aspartyl protease</keyword>
<keyword id="KW-0997">Cell inner membrane</keyword>
<keyword id="KW-1003">Cell membrane</keyword>
<keyword id="KW-0378">Hydrolase</keyword>
<keyword id="KW-0472">Membrane</keyword>
<keyword id="KW-0645">Protease</keyword>
<keyword id="KW-0812">Transmembrane</keyword>
<keyword id="KW-1133">Transmembrane helix</keyword>